<accession>C8ZH37</accession>
<organism>
    <name type="scientific">Saccharomyces cerevisiae (strain Lalvin EC1118 / Prise de mousse)</name>
    <name type="common">Baker's yeast</name>
    <dbReference type="NCBI Taxonomy" id="643680"/>
    <lineage>
        <taxon>Eukaryota</taxon>
        <taxon>Fungi</taxon>
        <taxon>Dikarya</taxon>
        <taxon>Ascomycota</taxon>
        <taxon>Saccharomycotina</taxon>
        <taxon>Saccharomycetes</taxon>
        <taxon>Saccharomycetales</taxon>
        <taxon>Saccharomycetaceae</taxon>
        <taxon>Saccharomyces</taxon>
    </lineage>
</organism>
<reference key="1">
    <citation type="journal article" date="2009" name="Proc. Natl. Acad. Sci. U.S.A.">
        <title>Eukaryote-to-eukaryote gene transfer events revealed by the genome sequence of the wine yeast Saccharomyces cerevisiae EC1118.</title>
        <authorList>
            <person name="Novo M."/>
            <person name="Bigey F."/>
            <person name="Beyne E."/>
            <person name="Galeote V."/>
            <person name="Gavory F."/>
            <person name="Mallet S."/>
            <person name="Cambon B."/>
            <person name="Legras J.-L."/>
            <person name="Wincker P."/>
            <person name="Casaregola S."/>
            <person name="Dequin S."/>
        </authorList>
    </citation>
    <scope>NUCLEOTIDE SEQUENCE [LARGE SCALE GENOMIC DNA]</scope>
    <source>
        <strain>Lalvin EC1118 / Prise de mousse</strain>
    </source>
</reference>
<proteinExistence type="inferred from homology"/>
<name>RRP36_YEAS8</name>
<evidence type="ECO:0000250" key="1"/>
<evidence type="ECO:0000250" key="2">
    <source>
        <dbReference type="UniProtKB" id="Q12481"/>
    </source>
</evidence>
<evidence type="ECO:0000255" key="3"/>
<evidence type="ECO:0000256" key="4">
    <source>
        <dbReference type="SAM" id="MobiDB-lite"/>
    </source>
</evidence>
<evidence type="ECO:0000305" key="5"/>
<dbReference type="EMBL" id="FN394216">
    <property type="protein sequence ID" value="CAY86566.1"/>
    <property type="molecule type" value="Genomic_DNA"/>
</dbReference>
<dbReference type="SMR" id="C8ZH37"/>
<dbReference type="HOGENOM" id="CLU_048802_3_0_1"/>
<dbReference type="OrthoDB" id="40760at4893"/>
<dbReference type="Proteomes" id="UP000000286">
    <property type="component" value="Chromosome XV, Scaffold EC1118_1O4"/>
</dbReference>
<dbReference type="GO" id="GO:0030686">
    <property type="term" value="C:90S preribosome"/>
    <property type="evidence" value="ECO:0007669"/>
    <property type="project" value="TreeGrafter"/>
</dbReference>
<dbReference type="GO" id="GO:0005730">
    <property type="term" value="C:nucleolus"/>
    <property type="evidence" value="ECO:0007669"/>
    <property type="project" value="UniProtKB-SubCell"/>
</dbReference>
<dbReference type="GO" id="GO:0000462">
    <property type="term" value="P:maturation of SSU-rRNA from tricistronic rRNA transcript (SSU-rRNA, 5.8S rRNA, LSU-rRNA)"/>
    <property type="evidence" value="ECO:0007669"/>
    <property type="project" value="TreeGrafter"/>
</dbReference>
<dbReference type="InterPro" id="IPR009292">
    <property type="entry name" value="RRP36"/>
</dbReference>
<dbReference type="PANTHER" id="PTHR21738">
    <property type="entry name" value="RIBOSOMAL RNA PROCESSING PROTEIN 36 HOMOLOG"/>
    <property type="match status" value="1"/>
</dbReference>
<dbReference type="PANTHER" id="PTHR21738:SF0">
    <property type="entry name" value="RIBOSOMAL RNA PROCESSING PROTEIN 36 HOMOLOG"/>
    <property type="match status" value="1"/>
</dbReference>
<dbReference type="Pfam" id="PF06102">
    <property type="entry name" value="RRP36"/>
    <property type="match status" value="1"/>
</dbReference>
<feature type="chain" id="PRO_0000397657" description="rRNA biogenesis protein RRP36">
    <location>
        <begin position="1"/>
        <end position="300"/>
    </location>
</feature>
<feature type="region of interest" description="Disordered" evidence="4">
    <location>
        <begin position="60"/>
        <end position="146"/>
    </location>
</feature>
<feature type="coiled-coil region" evidence="3">
    <location>
        <begin position="203"/>
        <end position="232"/>
    </location>
</feature>
<feature type="compositionally biased region" description="Acidic residues" evidence="4">
    <location>
        <begin position="85"/>
        <end position="109"/>
    </location>
</feature>
<feature type="compositionally biased region" description="Basic residues" evidence="4">
    <location>
        <begin position="114"/>
        <end position="124"/>
    </location>
</feature>
<feature type="modified residue" description="Phosphoserine" evidence="2">
    <location>
        <position position="14"/>
    </location>
</feature>
<feature type="modified residue" description="Phosphoserine" evidence="2">
    <location>
        <position position="41"/>
    </location>
</feature>
<feature type="modified residue" description="Phosphoserine" evidence="2">
    <location>
        <position position="42"/>
    </location>
</feature>
<keyword id="KW-0175">Coiled coil</keyword>
<keyword id="KW-0539">Nucleus</keyword>
<keyword id="KW-0597">Phosphoprotein</keyword>
<keyword id="KW-0687">Ribonucleoprotein</keyword>
<keyword id="KW-0690">Ribosome biogenesis</keyword>
<keyword id="KW-0698">rRNA processing</keyword>
<sequence>MSYYFKNLKPDLNSDVEEDDGNLLESIMANKSKREIDEQESSDDELKTLSFGSLKKAETIIDEEDFKDTKPVHKKPITTTYREESFDEDDDSEDKSDEDAGFFEEDSEDETHHGQKVPKKKSKHAPIEQSSKKRVPRVRNIPGLEIPRNKRSNLYQDIRFDKSTGKALDSSIIRKRYQFLDEYREKEIDELQKLLQDRKFLSKIDQGEREEMEQRLKSMKSRLQSMKNKDLEREILKEYESDMNKNNNTRYHLKKSEKRKVVQKWKFDHMKAKQREKVMERKRKKRLGKEFKQFEFHNRR</sequence>
<protein>
    <recommendedName>
        <fullName>rRNA biogenesis protein RRP36</fullName>
    </recommendedName>
    <alternativeName>
        <fullName>Ribosomal RNA-processing protein 36</fullName>
    </alternativeName>
</protein>
<comment type="function">
    <text evidence="1">Component of the 90S pre-ribosome involved in the maturation of rRNAs. Required for early cleavages of the pre-RNAs in the 40S ribosomal subunit maturation pathway (By similarity).</text>
</comment>
<comment type="subunit">
    <text evidence="1">Associates with 90S and pre-40S pre-ribosomal particles. Interacts with CKA1, CKA2, CKB1, CKB2, PWP2, UTP15, UTP17 and UTP22 (By similarity).</text>
</comment>
<comment type="subcellular location">
    <subcellularLocation>
        <location evidence="1">Nucleus</location>
        <location evidence="1">Nucleolus</location>
    </subcellularLocation>
</comment>
<comment type="similarity">
    <text evidence="5">Belongs to the RRP36 family.</text>
</comment>
<gene>
    <name type="primary">RRP36</name>
    <name type="ORF">EC1118_1O4_5193g</name>
</gene>